<reference key="1">
    <citation type="journal article" date="2005" name="Nucleic Acids Res.">
        <title>Genome dynamics and diversity of Shigella species, the etiologic agents of bacillary dysentery.</title>
        <authorList>
            <person name="Yang F."/>
            <person name="Yang J."/>
            <person name="Zhang X."/>
            <person name="Chen L."/>
            <person name="Jiang Y."/>
            <person name="Yan Y."/>
            <person name="Tang X."/>
            <person name="Wang J."/>
            <person name="Xiong Z."/>
            <person name="Dong J."/>
            <person name="Xue Y."/>
            <person name="Zhu Y."/>
            <person name="Xu X."/>
            <person name="Sun L."/>
            <person name="Chen S."/>
            <person name="Nie H."/>
            <person name="Peng J."/>
            <person name="Xu J."/>
            <person name="Wang Y."/>
            <person name="Yuan Z."/>
            <person name="Wen Y."/>
            <person name="Yao Z."/>
            <person name="Shen Y."/>
            <person name="Qiang B."/>
            <person name="Hou Y."/>
            <person name="Yu J."/>
            <person name="Jin Q."/>
        </authorList>
    </citation>
    <scope>NUCLEOTIDE SEQUENCE [LARGE SCALE GENOMIC DNA]</scope>
    <source>
        <strain>Ss046</strain>
    </source>
</reference>
<name>RL22_SHISS</name>
<proteinExistence type="inferred from homology"/>
<sequence length="110" mass="12226">METIAKHRHARSSAQKVRLVADLIRGKKVSQALDILTYTNKKAAVLVKKVLESAIANAEHNDGADIDDLKVTKIFVDEGPSMKRIMPRAKGRADRILKRTSHITVVVSDR</sequence>
<keyword id="KW-1185">Reference proteome</keyword>
<keyword id="KW-0687">Ribonucleoprotein</keyword>
<keyword id="KW-0689">Ribosomal protein</keyword>
<keyword id="KW-0694">RNA-binding</keyword>
<keyword id="KW-0699">rRNA-binding</keyword>
<feature type="chain" id="PRO_0000243206" description="Large ribosomal subunit protein uL22">
    <location>
        <begin position="1"/>
        <end position="110"/>
    </location>
</feature>
<comment type="function">
    <text evidence="1">This protein binds specifically to 23S rRNA; its binding is stimulated by other ribosomal proteins, e.g. L4, L17, and L20. It is important during the early stages of 50S assembly. It makes multiple contacts with different domains of the 23S rRNA in the assembled 50S subunit and ribosome (By similarity).</text>
</comment>
<comment type="function">
    <text evidence="1">The globular domain of the protein is located near the polypeptide exit tunnel on the outside of the subunit, while an extended beta-hairpin is found that lines the wall of the exit tunnel in the center of the 70S ribosome.</text>
</comment>
<comment type="subunit">
    <text evidence="1">Part of the 50S ribosomal subunit.</text>
</comment>
<comment type="similarity">
    <text evidence="1">Belongs to the universal ribosomal protein uL22 family.</text>
</comment>
<accession>Q3YWU4</accession>
<organism>
    <name type="scientific">Shigella sonnei (strain Ss046)</name>
    <dbReference type="NCBI Taxonomy" id="300269"/>
    <lineage>
        <taxon>Bacteria</taxon>
        <taxon>Pseudomonadati</taxon>
        <taxon>Pseudomonadota</taxon>
        <taxon>Gammaproteobacteria</taxon>
        <taxon>Enterobacterales</taxon>
        <taxon>Enterobacteriaceae</taxon>
        <taxon>Shigella</taxon>
    </lineage>
</organism>
<protein>
    <recommendedName>
        <fullName evidence="1">Large ribosomal subunit protein uL22</fullName>
    </recommendedName>
    <alternativeName>
        <fullName evidence="2">50S ribosomal protein L22</fullName>
    </alternativeName>
</protein>
<evidence type="ECO:0000255" key="1">
    <source>
        <dbReference type="HAMAP-Rule" id="MF_01331"/>
    </source>
</evidence>
<evidence type="ECO:0000305" key="2"/>
<dbReference type="EMBL" id="CP000038">
    <property type="protein sequence ID" value="AAZ90018.1"/>
    <property type="molecule type" value="Genomic_DNA"/>
</dbReference>
<dbReference type="RefSeq" id="WP_000447529.1">
    <property type="nucleotide sequence ID" value="NC_007384.1"/>
</dbReference>
<dbReference type="SMR" id="Q3YWU4"/>
<dbReference type="GeneID" id="93778672"/>
<dbReference type="KEGG" id="ssn:SSON_3456"/>
<dbReference type="HOGENOM" id="CLU_083987_3_3_6"/>
<dbReference type="Proteomes" id="UP000002529">
    <property type="component" value="Chromosome"/>
</dbReference>
<dbReference type="GO" id="GO:0022625">
    <property type="term" value="C:cytosolic large ribosomal subunit"/>
    <property type="evidence" value="ECO:0007669"/>
    <property type="project" value="TreeGrafter"/>
</dbReference>
<dbReference type="GO" id="GO:0019843">
    <property type="term" value="F:rRNA binding"/>
    <property type="evidence" value="ECO:0007669"/>
    <property type="project" value="UniProtKB-UniRule"/>
</dbReference>
<dbReference type="GO" id="GO:0003735">
    <property type="term" value="F:structural constituent of ribosome"/>
    <property type="evidence" value="ECO:0007669"/>
    <property type="project" value="InterPro"/>
</dbReference>
<dbReference type="GO" id="GO:0006412">
    <property type="term" value="P:translation"/>
    <property type="evidence" value="ECO:0007669"/>
    <property type="project" value="UniProtKB-UniRule"/>
</dbReference>
<dbReference type="CDD" id="cd00336">
    <property type="entry name" value="Ribosomal_L22"/>
    <property type="match status" value="1"/>
</dbReference>
<dbReference type="FunFam" id="3.90.470.10:FF:000001">
    <property type="entry name" value="50S ribosomal protein L22"/>
    <property type="match status" value="1"/>
</dbReference>
<dbReference type="Gene3D" id="3.90.470.10">
    <property type="entry name" value="Ribosomal protein L22/L17"/>
    <property type="match status" value="1"/>
</dbReference>
<dbReference type="HAMAP" id="MF_01331_B">
    <property type="entry name" value="Ribosomal_uL22_B"/>
    <property type="match status" value="1"/>
</dbReference>
<dbReference type="InterPro" id="IPR001063">
    <property type="entry name" value="Ribosomal_uL22"/>
</dbReference>
<dbReference type="InterPro" id="IPR005727">
    <property type="entry name" value="Ribosomal_uL22_bac/chlpt-type"/>
</dbReference>
<dbReference type="InterPro" id="IPR047867">
    <property type="entry name" value="Ribosomal_uL22_bac/org-type"/>
</dbReference>
<dbReference type="InterPro" id="IPR018260">
    <property type="entry name" value="Ribosomal_uL22_CS"/>
</dbReference>
<dbReference type="InterPro" id="IPR036394">
    <property type="entry name" value="Ribosomal_uL22_sf"/>
</dbReference>
<dbReference type="NCBIfam" id="TIGR01044">
    <property type="entry name" value="rplV_bact"/>
    <property type="match status" value="1"/>
</dbReference>
<dbReference type="PANTHER" id="PTHR13501">
    <property type="entry name" value="CHLOROPLAST 50S RIBOSOMAL PROTEIN L22-RELATED"/>
    <property type="match status" value="1"/>
</dbReference>
<dbReference type="PANTHER" id="PTHR13501:SF8">
    <property type="entry name" value="LARGE RIBOSOMAL SUBUNIT PROTEIN UL22M"/>
    <property type="match status" value="1"/>
</dbReference>
<dbReference type="Pfam" id="PF00237">
    <property type="entry name" value="Ribosomal_L22"/>
    <property type="match status" value="1"/>
</dbReference>
<dbReference type="SUPFAM" id="SSF54843">
    <property type="entry name" value="Ribosomal protein L22"/>
    <property type="match status" value="1"/>
</dbReference>
<dbReference type="PROSITE" id="PS00464">
    <property type="entry name" value="RIBOSOMAL_L22"/>
    <property type="match status" value="1"/>
</dbReference>
<gene>
    <name evidence="1" type="primary">rplV</name>
    <name type="ordered locus">SSON_3456</name>
</gene>